<accession>Q10302</accession>
<evidence type="ECO:0000269" key="1">
    <source>
    </source>
</evidence>
<evidence type="ECO:0000312" key="2">
    <source>
        <dbReference type="PomBase" id="SPAC22H10.09"/>
    </source>
</evidence>
<feature type="chain" id="PRO_0000116582" description="Cytochrome b translation regulator cbp8">
    <location>
        <begin position="1"/>
        <end position="646"/>
    </location>
</feature>
<sequence length="646" mass="76203">MLKTLSKVSKNLSNTSAFLVKSKPLYISFCTCKAYFEDNTSLSRRFFSAKKSLQFKSLIRKYSEDSTLAWRDYENYNDDDLLYQRELSEIYNKCLKALHPFYPVFEVNSNLYYQLLMFTNYSNPKDNGFSKLLFSQYSDEKKVLVNFVYNVLRLDPDLQRQKRILESIISAALNICVSTVNLSRTDLKSSLKIILQTIDLFKYDSSFSSIYFRKDGPYHKVEKLLKSANIRSSLNSKTFNDFRTLFLLLIRDYSLFHGNSSHCMLANSMLPPSIAFSKMEKAEIFLRLRAFFQLMEHIDNERITPSEQFLDKVFISLLSAKNSCSLKMWLIHSFNKGWPVKIEFFVSFFKNFSNIVEGSMEVYSAYLHIIRDHYNLSDLADVQAIFLSRFILLRKKEDCKKLLEHVLPIRQLFLLNCYSLLNVLANYVVVFKDRLIFQEINQNWEEHKGQIPENFIFSLLKMFGEMQENQGFLNACIYYINKKKNLNEVSRYKINLLLLQGVNSFEVKDFYRKRGIEIMPKNLPRFFCYCLKKNKLSYALKYIRLSGLQFDYIVDCFRNSSDWTRTLISILSKKMGTEFAIRFLKIISFPLLSNDKVLREIEFFAIHEVNFRSLKWVADQQLRILPGWSSRPQKATFPLCTVHLKK</sequence>
<proteinExistence type="evidence at protein level"/>
<keyword id="KW-0496">Mitochondrion</keyword>
<keyword id="KW-1185">Reference proteome</keyword>
<keyword id="KW-0810">Translation regulation</keyword>
<organism>
    <name type="scientific">Schizosaccharomyces pombe (strain 972 / ATCC 24843)</name>
    <name type="common">Fission yeast</name>
    <dbReference type="NCBI Taxonomy" id="284812"/>
    <lineage>
        <taxon>Eukaryota</taxon>
        <taxon>Fungi</taxon>
        <taxon>Dikarya</taxon>
        <taxon>Ascomycota</taxon>
        <taxon>Taphrinomycotina</taxon>
        <taxon>Schizosaccharomycetes</taxon>
        <taxon>Schizosaccharomycetales</taxon>
        <taxon>Schizosaccharomycetaceae</taxon>
        <taxon>Schizosaccharomyces</taxon>
    </lineage>
</organism>
<dbReference type="EMBL" id="CU329670">
    <property type="protein sequence ID" value="CAA93610.1"/>
    <property type="molecule type" value="Genomic_DNA"/>
</dbReference>
<dbReference type="PIR" id="T38212">
    <property type="entry name" value="T38212"/>
</dbReference>
<dbReference type="RefSeq" id="NP_593746.1">
    <property type="nucleotide sequence ID" value="NM_001019177.2"/>
</dbReference>
<dbReference type="BioGRID" id="278236">
    <property type="interactions" value="48"/>
</dbReference>
<dbReference type="STRING" id="284812.Q10302"/>
<dbReference type="PaxDb" id="4896-SPAC22H10.09.1"/>
<dbReference type="EnsemblFungi" id="SPAC22H10.09.1">
    <property type="protein sequence ID" value="SPAC22H10.09.1:pep"/>
    <property type="gene ID" value="SPAC22H10.09"/>
</dbReference>
<dbReference type="GeneID" id="2541742"/>
<dbReference type="KEGG" id="spo:2541742"/>
<dbReference type="PomBase" id="SPAC22H10.09">
    <property type="gene designation" value="cbp8"/>
</dbReference>
<dbReference type="VEuPathDB" id="FungiDB:SPAC22H10.09"/>
<dbReference type="HOGENOM" id="CLU_430307_0_0_1"/>
<dbReference type="InParanoid" id="Q10302"/>
<dbReference type="OMA" id="ILFFCYC"/>
<dbReference type="PRO" id="PR:Q10302"/>
<dbReference type="Proteomes" id="UP000002485">
    <property type="component" value="Chromosome I"/>
</dbReference>
<dbReference type="GO" id="GO:0005739">
    <property type="term" value="C:mitochondrion"/>
    <property type="evidence" value="ECO:0000314"/>
    <property type="project" value="UniProtKB"/>
</dbReference>
<dbReference type="GO" id="GO:0008494">
    <property type="term" value="F:translation activator activity"/>
    <property type="evidence" value="ECO:0000303"/>
    <property type="project" value="PomBase"/>
</dbReference>
<dbReference type="GO" id="GO:0045182">
    <property type="term" value="F:translation regulator activity"/>
    <property type="evidence" value="ECO:0000315"/>
    <property type="project" value="UniProtKB"/>
</dbReference>
<dbReference type="GO" id="GO:0070124">
    <property type="term" value="P:mitochondrial translational initiation"/>
    <property type="evidence" value="ECO:0000315"/>
    <property type="project" value="UniProtKB"/>
</dbReference>
<protein>
    <recommendedName>
        <fullName>Cytochrome b translation regulator cbp8</fullName>
    </recommendedName>
</protein>
<reference key="1">
    <citation type="journal article" date="2002" name="Nature">
        <title>The genome sequence of Schizosaccharomyces pombe.</title>
        <authorList>
            <person name="Wood V."/>
            <person name="Gwilliam R."/>
            <person name="Rajandream M.A."/>
            <person name="Lyne M.H."/>
            <person name="Lyne R."/>
            <person name="Stewart A."/>
            <person name="Sgouros J.G."/>
            <person name="Peat N."/>
            <person name="Hayles J."/>
            <person name="Baker S.G."/>
            <person name="Basham D."/>
            <person name="Bowman S."/>
            <person name="Brooks K."/>
            <person name="Brown D."/>
            <person name="Brown S."/>
            <person name="Chillingworth T."/>
            <person name="Churcher C.M."/>
            <person name="Collins M."/>
            <person name="Connor R."/>
            <person name="Cronin A."/>
            <person name="Davis P."/>
            <person name="Feltwell T."/>
            <person name="Fraser A."/>
            <person name="Gentles S."/>
            <person name="Goble A."/>
            <person name="Hamlin N."/>
            <person name="Harris D.E."/>
            <person name="Hidalgo J."/>
            <person name="Hodgson G."/>
            <person name="Holroyd S."/>
            <person name="Hornsby T."/>
            <person name="Howarth S."/>
            <person name="Huckle E.J."/>
            <person name="Hunt S."/>
            <person name="Jagels K."/>
            <person name="James K.D."/>
            <person name="Jones L."/>
            <person name="Jones M."/>
            <person name="Leather S."/>
            <person name="McDonald S."/>
            <person name="McLean J."/>
            <person name="Mooney P."/>
            <person name="Moule S."/>
            <person name="Mungall K.L."/>
            <person name="Murphy L.D."/>
            <person name="Niblett D."/>
            <person name="Odell C."/>
            <person name="Oliver K."/>
            <person name="O'Neil S."/>
            <person name="Pearson D."/>
            <person name="Quail M.A."/>
            <person name="Rabbinowitsch E."/>
            <person name="Rutherford K.M."/>
            <person name="Rutter S."/>
            <person name="Saunders D."/>
            <person name="Seeger K."/>
            <person name="Sharp S."/>
            <person name="Skelton J."/>
            <person name="Simmonds M.N."/>
            <person name="Squares R."/>
            <person name="Squares S."/>
            <person name="Stevens K."/>
            <person name="Taylor K."/>
            <person name="Taylor R.G."/>
            <person name="Tivey A."/>
            <person name="Walsh S.V."/>
            <person name="Warren T."/>
            <person name="Whitehead S."/>
            <person name="Woodward J.R."/>
            <person name="Volckaert G."/>
            <person name="Aert R."/>
            <person name="Robben J."/>
            <person name="Grymonprez B."/>
            <person name="Weltjens I."/>
            <person name="Vanstreels E."/>
            <person name="Rieger M."/>
            <person name="Schaefer M."/>
            <person name="Mueller-Auer S."/>
            <person name="Gabel C."/>
            <person name="Fuchs M."/>
            <person name="Duesterhoeft A."/>
            <person name="Fritzc C."/>
            <person name="Holzer E."/>
            <person name="Moestl D."/>
            <person name="Hilbert H."/>
            <person name="Borzym K."/>
            <person name="Langer I."/>
            <person name="Beck A."/>
            <person name="Lehrach H."/>
            <person name="Reinhardt R."/>
            <person name="Pohl T.M."/>
            <person name="Eger P."/>
            <person name="Zimmermann W."/>
            <person name="Wedler H."/>
            <person name="Wambutt R."/>
            <person name="Purnelle B."/>
            <person name="Goffeau A."/>
            <person name="Cadieu E."/>
            <person name="Dreano S."/>
            <person name="Gloux S."/>
            <person name="Lelaure V."/>
            <person name="Mottier S."/>
            <person name="Galibert F."/>
            <person name="Aves S.J."/>
            <person name="Xiang Z."/>
            <person name="Hunt C."/>
            <person name="Moore K."/>
            <person name="Hurst S.M."/>
            <person name="Lucas M."/>
            <person name="Rochet M."/>
            <person name="Gaillardin C."/>
            <person name="Tallada V.A."/>
            <person name="Garzon A."/>
            <person name="Thode G."/>
            <person name="Daga R.R."/>
            <person name="Cruzado L."/>
            <person name="Jimenez J."/>
            <person name="Sanchez M."/>
            <person name="del Rey F."/>
            <person name="Benito J."/>
            <person name="Dominguez A."/>
            <person name="Revuelta J.L."/>
            <person name="Moreno S."/>
            <person name="Armstrong J."/>
            <person name="Forsburg S.L."/>
            <person name="Cerutti L."/>
            <person name="Lowe T."/>
            <person name="McCombie W.R."/>
            <person name="Paulsen I."/>
            <person name="Potashkin J."/>
            <person name="Shpakovski G.V."/>
            <person name="Ussery D."/>
            <person name="Barrell B.G."/>
            <person name="Nurse P."/>
        </authorList>
    </citation>
    <scope>NUCLEOTIDE SEQUENCE [LARGE SCALE GENOMIC DNA]</scope>
    <source>
        <strain>972 / ATCC 24843</strain>
    </source>
</reference>
<reference key="2">
    <citation type="journal article" date="2021" name="Nucleic Acids Res.">
        <title>Translational activators and mitoribosomal isoforms cooperate to mediate mRNA-specific translation in Schizosaccharomyces pombe mitochondria.</title>
        <authorList>
            <person name="Herbert C.J."/>
            <person name="Labarre-Mariotte S."/>
            <person name="Cornu D."/>
            <person name="Sophie C."/>
            <person name="Panozzo C."/>
            <person name="Michel T."/>
            <person name="Dujardin G."/>
            <person name="Bonnefoy N."/>
        </authorList>
    </citation>
    <scope>FUNCTION</scope>
    <scope>IDENTIFICATION IN A COMPLEX WITH CBP7</scope>
    <scope>SUBCELLULAR LOCATION</scope>
    <scope>DISRUPTION PHENOTYPE</scope>
</reference>
<gene>
    <name evidence="2" type="primary">cbp8</name>
    <name type="ORF">SPAC22H10.09</name>
</gene>
<comment type="function">
    <text evidence="1">Translation factor for cob1/cytochrome b; plays a role in cob1 mRNA stabilization and required for correct folding of the protein.</text>
</comment>
<comment type="subunit">
    <text evidence="1">Component of a complex, at least composed of cbp7 and cbp8.</text>
</comment>
<comment type="subcellular location">
    <subcellularLocation>
        <location evidence="1">Mitochondrion</location>
    </subcellularLocation>
</comment>
<comment type="disruption phenotype">
    <text evidence="1">Decreases mitochondrial respiratory chain complex III assembly (PubMed:34634819). Decreases RNA level of cytochrome b cob1 and may lead to abnormal folding of cob1 protein (PubMed:34634819). Abolishes growth on the non-fermentable carbon source galactose (PubMed:34634819).</text>
</comment>
<name>CBP8_SCHPO</name>